<sequence length="216" mass="23889">MWPPCGTLRTLALARSRGARACSGDGGVSYTQGQSPEPRTREYFYYVDHQGQLFLDDSKMKNFITCFKDPQFLVTFFSRLRPNRSGRYEAAFPFLSPCGRERNFLRCEDRPVVFTHLLTADHGPPRLSYCGGGEALAVPFEPARLLPLAANGRLYHPAPERAGGVGLVRSALAFELSACFEYGPGAPALPSHVRWQGRRLALTMDLAPLLLAARSP</sequence>
<gene>
    <name type="primary">C8orf82</name>
</gene>
<evidence type="ECO:0000303" key="1">
    <source>
    </source>
</evidence>
<evidence type="ECO:0000305" key="2"/>
<accession>Q6P1X6</accession>
<accession>Q6GMR2</accession>
<accession>Q6P2Q7</accession>
<reference key="1">
    <citation type="submission" date="2005-09" db="EMBL/GenBank/DDBJ databases">
        <authorList>
            <person name="Mural R.J."/>
            <person name="Istrail S."/>
            <person name="Sutton G.G."/>
            <person name="Florea L."/>
            <person name="Halpern A.L."/>
            <person name="Mobarry C.M."/>
            <person name="Lippert R."/>
            <person name="Walenz B."/>
            <person name="Shatkay H."/>
            <person name="Dew I."/>
            <person name="Miller J.R."/>
            <person name="Flanigan M.J."/>
            <person name="Edwards N.J."/>
            <person name="Bolanos R."/>
            <person name="Fasulo D."/>
            <person name="Halldorsson B.V."/>
            <person name="Hannenhalli S."/>
            <person name="Turner R."/>
            <person name="Yooseph S."/>
            <person name="Lu F."/>
            <person name="Nusskern D.R."/>
            <person name="Shue B.C."/>
            <person name="Zheng X.H."/>
            <person name="Zhong F."/>
            <person name="Delcher A.L."/>
            <person name="Huson D.H."/>
            <person name="Kravitz S.A."/>
            <person name="Mouchard L."/>
            <person name="Reinert K."/>
            <person name="Remington K.A."/>
            <person name="Clark A.G."/>
            <person name="Waterman M.S."/>
            <person name="Eichler E.E."/>
            <person name="Adams M.D."/>
            <person name="Hunkapiller M.W."/>
            <person name="Myers E.W."/>
            <person name="Venter J.C."/>
        </authorList>
    </citation>
    <scope>NUCLEOTIDE SEQUENCE [LARGE SCALE GENOMIC DNA]</scope>
</reference>
<reference key="2">
    <citation type="journal article" date="2004" name="Genome Res.">
        <title>The status, quality, and expansion of the NIH full-length cDNA project: the Mammalian Gene Collection (MGC).</title>
        <authorList>
            <consortium name="The MGC Project Team"/>
        </authorList>
    </citation>
    <scope>NUCLEOTIDE SEQUENCE [LARGE SCALE MRNA] (ISOFORMS 1 AND 2)</scope>
    <source>
        <tissue>Ovary</tissue>
        <tissue>Pancreas</tissue>
        <tissue>Uterus</tissue>
    </source>
</reference>
<reference key="3">
    <citation type="journal article" date="2015" name="Proteomics">
        <title>N-terminome analysis of the human mitochondrial proteome.</title>
        <authorList>
            <person name="Vaca Jacome A.S."/>
            <person name="Rabilloud T."/>
            <person name="Schaeffer-Reiss C."/>
            <person name="Rompais M."/>
            <person name="Ayoub D."/>
            <person name="Lane L."/>
            <person name="Bairoch A."/>
            <person name="Van Dorsselaer A."/>
            <person name="Carapito C."/>
        </authorList>
    </citation>
    <scope>IDENTIFICATION BY MASS SPECTROMETRY [LARGE SCALE ANALYSIS]</scope>
</reference>
<comment type="alternative products">
    <event type="alternative splicing"/>
    <isoform>
        <id>Q6P1X6-1</id>
        <name>1</name>
        <sequence type="displayed"/>
    </isoform>
    <isoform>
        <id>Q6P1X6-2</id>
        <name>2</name>
        <sequence type="described" ref="VSP_034215"/>
    </isoform>
</comment>
<comment type="similarity">
    <text evidence="2">Belongs to the UPF0598 family.</text>
</comment>
<organism>
    <name type="scientific">Homo sapiens</name>
    <name type="common">Human</name>
    <dbReference type="NCBI Taxonomy" id="9606"/>
    <lineage>
        <taxon>Eukaryota</taxon>
        <taxon>Metazoa</taxon>
        <taxon>Chordata</taxon>
        <taxon>Craniata</taxon>
        <taxon>Vertebrata</taxon>
        <taxon>Euteleostomi</taxon>
        <taxon>Mammalia</taxon>
        <taxon>Eutheria</taxon>
        <taxon>Euarchontoglires</taxon>
        <taxon>Primates</taxon>
        <taxon>Haplorrhini</taxon>
        <taxon>Catarrhini</taxon>
        <taxon>Hominidae</taxon>
        <taxon>Homo</taxon>
    </lineage>
</organism>
<feature type="chain" id="PRO_0000340669" description="UPF0598 protein C8orf82">
    <location>
        <begin position="1"/>
        <end position="216"/>
    </location>
</feature>
<feature type="splice variant" id="VSP_034215" description="In isoform 2." evidence="1">
    <original>MWPPCGTLRTLALARSRGARACSGDGGVSYTQGQSPEPRTREYFYYVDHQGQLFLDDSKMKNFITCFK</original>
    <variation>MGSPTLPTGPAHQGVGVLRSGAPLSEARRTSYRRRLPSVWSWARRPWEPSALSTRTLHPP</variation>
    <location>
        <begin position="1"/>
        <end position="68"/>
    </location>
</feature>
<feature type="sequence conflict" description="In Ref. 2; AAH64829." evidence="2" ref="2">
    <original>E</original>
    <variation>D</variation>
    <location>
        <position position="37"/>
    </location>
</feature>
<proteinExistence type="evidence at protein level"/>
<keyword id="KW-0025">Alternative splicing</keyword>
<keyword id="KW-1267">Proteomics identification</keyword>
<keyword id="KW-1185">Reference proteome</keyword>
<name>CH082_HUMAN</name>
<protein>
    <recommendedName>
        <fullName>UPF0598 protein C8orf82</fullName>
    </recommendedName>
</protein>
<dbReference type="EMBL" id="CH471162">
    <property type="protein sequence ID" value="EAW82063.1"/>
    <property type="molecule type" value="Genomic_DNA"/>
</dbReference>
<dbReference type="EMBL" id="BC064373">
    <property type="protein sequence ID" value="AAH64373.1"/>
    <property type="molecule type" value="mRNA"/>
</dbReference>
<dbReference type="EMBL" id="BC064829">
    <property type="protein sequence ID" value="AAH64829.1"/>
    <property type="molecule type" value="mRNA"/>
</dbReference>
<dbReference type="EMBL" id="BC073936">
    <property type="protein sequence ID" value="AAH73936.1"/>
    <property type="molecule type" value="mRNA"/>
</dbReference>
<dbReference type="CCDS" id="CCDS34970.1">
    <molecule id="Q6P1X6-1"/>
</dbReference>
<dbReference type="RefSeq" id="NP_001001795.1">
    <molecule id="Q6P1X6-1"/>
    <property type="nucleotide sequence ID" value="NM_001001795.2"/>
</dbReference>
<dbReference type="BioGRID" id="136099">
    <property type="interactions" value="168"/>
</dbReference>
<dbReference type="FunCoup" id="Q6P1X6">
    <property type="interactions" value="47"/>
</dbReference>
<dbReference type="IntAct" id="Q6P1X6">
    <property type="interactions" value="7"/>
</dbReference>
<dbReference type="STRING" id="9606.ENSP00000436621"/>
<dbReference type="iPTMnet" id="Q6P1X6"/>
<dbReference type="PhosphoSitePlus" id="Q6P1X6"/>
<dbReference type="SwissPalm" id="Q6P1X6"/>
<dbReference type="BioMuta" id="C8orf82"/>
<dbReference type="DMDM" id="190411564"/>
<dbReference type="jPOST" id="Q6P1X6"/>
<dbReference type="MassIVE" id="Q6P1X6"/>
<dbReference type="PaxDb" id="9606-ENSP00000436621"/>
<dbReference type="PeptideAtlas" id="Q6P1X6"/>
<dbReference type="ProteomicsDB" id="66878">
    <molecule id="Q6P1X6-1"/>
</dbReference>
<dbReference type="ProteomicsDB" id="66879">
    <molecule id="Q6P1X6-2"/>
</dbReference>
<dbReference type="Pumba" id="Q6P1X6"/>
<dbReference type="Antibodypedia" id="70565">
    <property type="antibodies" value="11 antibodies from 9 providers"/>
</dbReference>
<dbReference type="DNASU" id="414919"/>
<dbReference type="Ensembl" id="ENST00000524821.6">
    <molecule id="Q6P1X6-1"/>
    <property type="protein sequence ID" value="ENSP00000436621.1"/>
    <property type="gene ID" value="ENSG00000213563.7"/>
</dbReference>
<dbReference type="Ensembl" id="ENST00000534680.5">
    <molecule id="Q6P1X6-1"/>
    <property type="protein sequence ID" value="ENSP00000434593.1"/>
    <property type="gene ID" value="ENSG00000213563.7"/>
</dbReference>
<dbReference type="GeneID" id="414919"/>
<dbReference type="KEGG" id="hsa:414919"/>
<dbReference type="MANE-Select" id="ENST00000524821.6">
    <property type="protein sequence ID" value="ENSP00000436621.1"/>
    <property type="RefSeq nucleotide sequence ID" value="NM_001001795.2"/>
    <property type="RefSeq protein sequence ID" value="NP_001001795.1"/>
</dbReference>
<dbReference type="UCSC" id="uc003zdp.2">
    <molecule id="Q6P1X6-1"/>
    <property type="organism name" value="human"/>
</dbReference>
<dbReference type="AGR" id="HGNC:33826"/>
<dbReference type="CTD" id="414919"/>
<dbReference type="GeneCards" id="C8orf82"/>
<dbReference type="HGNC" id="HGNC:33826">
    <property type="gene designation" value="C8orf82"/>
</dbReference>
<dbReference type="HPA" id="ENSG00000213563">
    <property type="expression patterns" value="Low tissue specificity"/>
</dbReference>
<dbReference type="neXtProt" id="NX_Q6P1X6"/>
<dbReference type="OpenTargets" id="ENSG00000213563"/>
<dbReference type="PharmGKB" id="PA162380827"/>
<dbReference type="VEuPathDB" id="HostDB:ENSG00000213563"/>
<dbReference type="eggNOG" id="ENOG502R8EE">
    <property type="taxonomic scope" value="Eukaryota"/>
</dbReference>
<dbReference type="GeneTree" id="ENSGT00390000011521"/>
<dbReference type="HOGENOM" id="CLU_069446_2_0_1"/>
<dbReference type="InParanoid" id="Q6P1X6"/>
<dbReference type="OMA" id="IKNFTSC"/>
<dbReference type="OrthoDB" id="10260024at2759"/>
<dbReference type="PAN-GO" id="Q6P1X6">
    <property type="GO annotations" value="0 GO annotations based on evolutionary models"/>
</dbReference>
<dbReference type="PhylomeDB" id="Q6P1X6"/>
<dbReference type="TreeFam" id="TF323959"/>
<dbReference type="PathwayCommons" id="Q6P1X6"/>
<dbReference type="SignaLink" id="Q6P1X6"/>
<dbReference type="BioGRID-ORCS" id="414919">
    <property type="hits" value="13 hits in 1147 CRISPR screens"/>
</dbReference>
<dbReference type="ChiTaRS" id="C8orf82">
    <property type="organism name" value="human"/>
</dbReference>
<dbReference type="GenomeRNAi" id="414919"/>
<dbReference type="Pharos" id="Q6P1X6">
    <property type="development level" value="Tdark"/>
</dbReference>
<dbReference type="PRO" id="PR:Q6P1X6"/>
<dbReference type="Proteomes" id="UP000005640">
    <property type="component" value="Chromosome 8"/>
</dbReference>
<dbReference type="RNAct" id="Q6P1X6">
    <property type="molecule type" value="protein"/>
</dbReference>
<dbReference type="Bgee" id="ENSG00000213563">
    <property type="expression patterns" value="Expressed in ileal mucosa and 150 other cell types or tissues"/>
</dbReference>
<dbReference type="ExpressionAtlas" id="Q6P1X6">
    <property type="expression patterns" value="baseline and differential"/>
</dbReference>
<dbReference type="GO" id="GO:0005739">
    <property type="term" value="C:mitochondrion"/>
    <property type="evidence" value="ECO:0006056"/>
    <property type="project" value="FlyBase"/>
</dbReference>
<dbReference type="InterPro" id="IPR028108">
    <property type="entry name" value="DUF4505"/>
</dbReference>
<dbReference type="PANTHER" id="PTHR31449">
    <property type="entry name" value="UPF0598 PROTEIN C8ORF82"/>
    <property type="match status" value="1"/>
</dbReference>
<dbReference type="PANTHER" id="PTHR31449:SF3">
    <property type="entry name" value="UPF0598 PROTEIN C8ORF82"/>
    <property type="match status" value="1"/>
</dbReference>
<dbReference type="Pfam" id="PF14956">
    <property type="entry name" value="DUF4505"/>
    <property type="match status" value="1"/>
</dbReference>